<feature type="chain" id="PRO_1000072777" description="Adenosylcobinamide-GDP ribazoletransferase">
    <location>
        <begin position="1"/>
        <end position="257"/>
    </location>
</feature>
<feature type="transmembrane region" description="Helical" evidence="1">
    <location>
        <begin position="30"/>
        <end position="50"/>
    </location>
</feature>
<feature type="transmembrane region" description="Helical" evidence="1">
    <location>
        <begin position="52"/>
        <end position="72"/>
    </location>
</feature>
<feature type="transmembrane region" description="Helical" evidence="1">
    <location>
        <begin position="109"/>
        <end position="129"/>
    </location>
</feature>
<feature type="transmembrane region" description="Helical" evidence="1">
    <location>
        <begin position="132"/>
        <end position="152"/>
    </location>
</feature>
<feature type="transmembrane region" description="Helical" evidence="1">
    <location>
        <begin position="175"/>
        <end position="195"/>
    </location>
</feature>
<feature type="transmembrane region" description="Helical" evidence="1">
    <location>
        <begin position="198"/>
        <end position="218"/>
    </location>
</feature>
<feature type="transmembrane region" description="Helical" evidence="1">
    <location>
        <begin position="237"/>
        <end position="257"/>
    </location>
</feature>
<proteinExistence type="inferred from homology"/>
<accession>Q180T5</accession>
<sequence>MKRFILILQFLTRIPIKLNVGFDDEFYKSIVYFPLVGFVIGILSYLIGWISMLLFEPFIASIIITLAGVLITGGLHIDGLGDTFDAIYSYRDKEKMLEIMKDSRLGTNSLLAIMFVLLLKVGFVYDIISNNSLWVIIFMPMIARLGVMLLTYKTVTPREKGMGNLFIGKLTTSMLITAIIYTLLIVALITKFIFLLPNIVLIKVLGSIIVVFVFIILFKKHIYKKIDGVTGDILGCGIELSELVYLIYIYLLIFMFF</sequence>
<reference key="1">
    <citation type="journal article" date="2006" name="Nat. Genet.">
        <title>The multidrug-resistant human pathogen Clostridium difficile has a highly mobile, mosaic genome.</title>
        <authorList>
            <person name="Sebaihia M."/>
            <person name="Wren B.W."/>
            <person name="Mullany P."/>
            <person name="Fairweather N.F."/>
            <person name="Minton N."/>
            <person name="Stabler R."/>
            <person name="Thomson N.R."/>
            <person name="Roberts A.P."/>
            <person name="Cerdeno-Tarraga A.M."/>
            <person name="Wang H."/>
            <person name="Holden M.T.G."/>
            <person name="Wright A."/>
            <person name="Churcher C."/>
            <person name="Quail M.A."/>
            <person name="Baker S."/>
            <person name="Bason N."/>
            <person name="Brooks K."/>
            <person name="Chillingworth T."/>
            <person name="Cronin A."/>
            <person name="Davis P."/>
            <person name="Dowd L."/>
            <person name="Fraser A."/>
            <person name="Feltwell T."/>
            <person name="Hance Z."/>
            <person name="Holroyd S."/>
            <person name="Jagels K."/>
            <person name="Moule S."/>
            <person name="Mungall K."/>
            <person name="Price C."/>
            <person name="Rabbinowitsch E."/>
            <person name="Sharp S."/>
            <person name="Simmonds M."/>
            <person name="Stevens K."/>
            <person name="Unwin L."/>
            <person name="Whithead S."/>
            <person name="Dupuy B."/>
            <person name="Dougan G."/>
            <person name="Barrell B."/>
            <person name="Parkhill J."/>
        </authorList>
    </citation>
    <scope>NUCLEOTIDE SEQUENCE [LARGE SCALE GENOMIC DNA]</scope>
    <source>
        <strain>630</strain>
    </source>
</reference>
<keyword id="KW-1003">Cell membrane</keyword>
<keyword id="KW-0169">Cobalamin biosynthesis</keyword>
<keyword id="KW-0460">Magnesium</keyword>
<keyword id="KW-0472">Membrane</keyword>
<keyword id="KW-1185">Reference proteome</keyword>
<keyword id="KW-0808">Transferase</keyword>
<keyword id="KW-0812">Transmembrane</keyword>
<keyword id="KW-1133">Transmembrane helix</keyword>
<protein>
    <recommendedName>
        <fullName evidence="1">Adenosylcobinamide-GDP ribazoletransferase</fullName>
        <ecNumber evidence="1">2.7.8.26</ecNumber>
    </recommendedName>
    <alternativeName>
        <fullName evidence="1">Cobalamin synthase</fullName>
    </alternativeName>
    <alternativeName>
        <fullName evidence="1">Cobalamin-5'-phosphate synthase</fullName>
    </alternativeName>
</protein>
<name>COBS_CLOD6</name>
<comment type="function">
    <text evidence="1">Joins adenosylcobinamide-GDP and alpha-ribazole to generate adenosylcobalamin (Ado-cobalamin). Also synthesizes adenosylcobalamin 5'-phosphate from adenosylcobinamide-GDP and alpha-ribazole 5'-phosphate.</text>
</comment>
<comment type="catalytic activity">
    <reaction evidence="1">
        <text>alpha-ribazole + adenosylcob(III)inamide-GDP = adenosylcob(III)alamin + GMP + H(+)</text>
        <dbReference type="Rhea" id="RHEA:16049"/>
        <dbReference type="ChEBI" id="CHEBI:10329"/>
        <dbReference type="ChEBI" id="CHEBI:15378"/>
        <dbReference type="ChEBI" id="CHEBI:18408"/>
        <dbReference type="ChEBI" id="CHEBI:58115"/>
        <dbReference type="ChEBI" id="CHEBI:60487"/>
        <dbReference type="EC" id="2.7.8.26"/>
    </reaction>
</comment>
<comment type="catalytic activity">
    <reaction evidence="1">
        <text>alpha-ribazole 5'-phosphate + adenosylcob(III)inamide-GDP = adenosylcob(III)alamin 5'-phosphate + GMP + H(+)</text>
        <dbReference type="Rhea" id="RHEA:23560"/>
        <dbReference type="ChEBI" id="CHEBI:15378"/>
        <dbReference type="ChEBI" id="CHEBI:57918"/>
        <dbReference type="ChEBI" id="CHEBI:58115"/>
        <dbReference type="ChEBI" id="CHEBI:60487"/>
        <dbReference type="ChEBI" id="CHEBI:60493"/>
        <dbReference type="EC" id="2.7.8.26"/>
    </reaction>
</comment>
<comment type="cofactor">
    <cofactor evidence="1">
        <name>Mg(2+)</name>
        <dbReference type="ChEBI" id="CHEBI:18420"/>
    </cofactor>
</comment>
<comment type="pathway">
    <text evidence="1">Cofactor biosynthesis; adenosylcobalamin biosynthesis; adenosylcobalamin from cob(II)yrinate a,c-diamide: step 7/7.</text>
</comment>
<comment type="subcellular location">
    <subcellularLocation>
        <location evidence="1">Cell membrane</location>
        <topology evidence="1">Multi-pass membrane protein</topology>
    </subcellularLocation>
</comment>
<comment type="similarity">
    <text evidence="1">Belongs to the CobS family.</text>
</comment>
<evidence type="ECO:0000255" key="1">
    <source>
        <dbReference type="HAMAP-Rule" id="MF_00719"/>
    </source>
</evidence>
<dbReference type="EC" id="2.7.8.26" evidence="1"/>
<dbReference type="EMBL" id="AM180355">
    <property type="protein sequence ID" value="CAJ70340.1"/>
    <property type="molecule type" value="Genomic_DNA"/>
</dbReference>
<dbReference type="RefSeq" id="WP_003437766.1">
    <property type="nucleotide sequence ID" value="NZ_JAUPES010000009.1"/>
</dbReference>
<dbReference type="RefSeq" id="YP_001089957.1">
    <property type="nucleotide sequence ID" value="NC_009089.1"/>
</dbReference>
<dbReference type="STRING" id="272563.CD630_34370"/>
<dbReference type="EnsemblBacteria" id="CAJ70340">
    <property type="protein sequence ID" value="CAJ70340"/>
    <property type="gene ID" value="CD630_34370"/>
</dbReference>
<dbReference type="GeneID" id="66355897"/>
<dbReference type="KEGG" id="cdf:CD630_34370"/>
<dbReference type="KEGG" id="pdc:CDIF630_03746"/>
<dbReference type="PATRIC" id="fig|272563.120.peg.3631"/>
<dbReference type="eggNOG" id="COG0368">
    <property type="taxonomic scope" value="Bacteria"/>
</dbReference>
<dbReference type="OrthoDB" id="9794626at2"/>
<dbReference type="PhylomeDB" id="Q180T5"/>
<dbReference type="BioCyc" id="PDIF272563:G12WB-3614-MONOMER"/>
<dbReference type="UniPathway" id="UPA00148">
    <property type="reaction ID" value="UER00238"/>
</dbReference>
<dbReference type="Proteomes" id="UP000001978">
    <property type="component" value="Chromosome"/>
</dbReference>
<dbReference type="GO" id="GO:0005886">
    <property type="term" value="C:plasma membrane"/>
    <property type="evidence" value="ECO:0007669"/>
    <property type="project" value="UniProtKB-SubCell"/>
</dbReference>
<dbReference type="GO" id="GO:0051073">
    <property type="term" value="F:adenosylcobinamide-GDP ribazoletransferase activity"/>
    <property type="evidence" value="ECO:0007669"/>
    <property type="project" value="UniProtKB-UniRule"/>
</dbReference>
<dbReference type="GO" id="GO:0008818">
    <property type="term" value="F:cobalamin 5'-phosphate synthase activity"/>
    <property type="evidence" value="ECO:0007669"/>
    <property type="project" value="UniProtKB-UniRule"/>
</dbReference>
<dbReference type="GO" id="GO:0009236">
    <property type="term" value="P:cobalamin biosynthetic process"/>
    <property type="evidence" value="ECO:0007669"/>
    <property type="project" value="UniProtKB-UniRule"/>
</dbReference>
<dbReference type="HAMAP" id="MF_00719">
    <property type="entry name" value="CobS"/>
    <property type="match status" value="1"/>
</dbReference>
<dbReference type="InterPro" id="IPR003805">
    <property type="entry name" value="CobS"/>
</dbReference>
<dbReference type="NCBIfam" id="TIGR00317">
    <property type="entry name" value="cobS"/>
    <property type="match status" value="1"/>
</dbReference>
<dbReference type="PANTHER" id="PTHR34148">
    <property type="entry name" value="ADENOSYLCOBINAMIDE-GDP RIBAZOLETRANSFERASE"/>
    <property type="match status" value="1"/>
</dbReference>
<dbReference type="PANTHER" id="PTHR34148:SF1">
    <property type="entry name" value="ADENOSYLCOBINAMIDE-GDP RIBAZOLETRANSFERASE"/>
    <property type="match status" value="1"/>
</dbReference>
<dbReference type="Pfam" id="PF02654">
    <property type="entry name" value="CobS"/>
    <property type="match status" value="1"/>
</dbReference>
<organism>
    <name type="scientific">Clostridioides difficile (strain 630)</name>
    <name type="common">Peptoclostridium difficile</name>
    <dbReference type="NCBI Taxonomy" id="272563"/>
    <lineage>
        <taxon>Bacteria</taxon>
        <taxon>Bacillati</taxon>
        <taxon>Bacillota</taxon>
        <taxon>Clostridia</taxon>
        <taxon>Peptostreptococcales</taxon>
        <taxon>Peptostreptococcaceae</taxon>
        <taxon>Clostridioides</taxon>
    </lineage>
</organism>
<gene>
    <name evidence="1" type="primary">cobS</name>
    <name type="ordered locus">CD630_34370</name>
</gene>